<accession>Q95734</accession>
<accession>Q34464</accession>
<name>CYB_ARTHA</name>
<feature type="chain" id="PRO_0000060632" description="Cytochrome b">
    <location>
        <begin position="1"/>
        <end position="379"/>
    </location>
</feature>
<feature type="transmembrane region" description="Helical" evidence="2">
    <location>
        <begin position="33"/>
        <end position="53"/>
    </location>
</feature>
<feature type="transmembrane region" description="Helical" evidence="2">
    <location>
        <begin position="77"/>
        <end position="98"/>
    </location>
</feature>
<feature type="transmembrane region" description="Helical" evidence="2">
    <location>
        <begin position="113"/>
        <end position="133"/>
    </location>
</feature>
<feature type="transmembrane region" description="Helical" evidence="2">
    <location>
        <begin position="178"/>
        <end position="198"/>
    </location>
</feature>
<feature type="transmembrane region" description="Helical" evidence="2">
    <location>
        <begin position="226"/>
        <end position="246"/>
    </location>
</feature>
<feature type="transmembrane region" description="Helical" evidence="2">
    <location>
        <begin position="288"/>
        <end position="308"/>
    </location>
</feature>
<feature type="transmembrane region" description="Helical" evidence="2">
    <location>
        <begin position="320"/>
        <end position="340"/>
    </location>
</feature>
<feature type="transmembrane region" description="Helical" evidence="2">
    <location>
        <begin position="347"/>
        <end position="367"/>
    </location>
</feature>
<feature type="binding site" description="axial binding residue" evidence="2">
    <location>
        <position position="83"/>
    </location>
    <ligand>
        <name>heme b</name>
        <dbReference type="ChEBI" id="CHEBI:60344"/>
        <label>b562</label>
    </ligand>
    <ligandPart>
        <name>Fe</name>
        <dbReference type="ChEBI" id="CHEBI:18248"/>
    </ligandPart>
</feature>
<feature type="binding site" description="axial binding residue" evidence="2">
    <location>
        <position position="97"/>
    </location>
    <ligand>
        <name>heme b</name>
        <dbReference type="ChEBI" id="CHEBI:60344"/>
        <label>b566</label>
    </ligand>
    <ligandPart>
        <name>Fe</name>
        <dbReference type="ChEBI" id="CHEBI:18248"/>
    </ligandPart>
</feature>
<feature type="binding site" description="axial binding residue" evidence="2">
    <location>
        <position position="182"/>
    </location>
    <ligand>
        <name>heme b</name>
        <dbReference type="ChEBI" id="CHEBI:60344"/>
        <label>b562</label>
    </ligand>
    <ligandPart>
        <name>Fe</name>
        <dbReference type="ChEBI" id="CHEBI:18248"/>
    </ligandPart>
</feature>
<feature type="binding site" description="axial binding residue" evidence="2">
    <location>
        <position position="196"/>
    </location>
    <ligand>
        <name>heme b</name>
        <dbReference type="ChEBI" id="CHEBI:60344"/>
        <label>b566</label>
    </ligand>
    <ligandPart>
        <name>Fe</name>
        <dbReference type="ChEBI" id="CHEBI:18248"/>
    </ligandPart>
</feature>
<feature type="binding site" evidence="2">
    <location>
        <position position="201"/>
    </location>
    <ligand>
        <name>a ubiquinone</name>
        <dbReference type="ChEBI" id="CHEBI:16389"/>
    </ligand>
</feature>
<feature type="sequence conflict" description="In Ref. 2; AAA31742." evidence="5" ref="2">
    <original>K</original>
    <variation>T</variation>
    <location>
        <position position="61"/>
    </location>
</feature>
<feature type="sequence conflict" description="In Ref. 2; AAA31742." evidence="5" ref="2">
    <original>R</original>
    <variation>L</variation>
    <location>
        <position position="100"/>
    </location>
</feature>
<geneLocation type="mitochondrion"/>
<protein>
    <recommendedName>
        <fullName>Cytochrome b</fullName>
    </recommendedName>
    <alternativeName>
        <fullName>Complex III subunit 3</fullName>
    </alternativeName>
    <alternativeName>
        <fullName>Complex III subunit III</fullName>
    </alternativeName>
    <alternativeName>
        <fullName>Cytochrome b-c1 complex subunit 3</fullName>
    </alternativeName>
    <alternativeName>
        <fullName>Ubiquinol-cytochrome-c reductase complex cytochrome b subunit</fullName>
    </alternativeName>
</protein>
<dbReference type="EMBL" id="U66517">
    <property type="protein sequence ID" value="AAB06775.1"/>
    <property type="molecule type" value="Genomic_DNA"/>
</dbReference>
<dbReference type="EMBL" id="L19514">
    <property type="protein sequence ID" value="AAA31742.1"/>
    <property type="molecule type" value="Genomic_DNA"/>
</dbReference>
<dbReference type="SMR" id="Q95734"/>
<dbReference type="GO" id="GO:0005743">
    <property type="term" value="C:mitochondrial inner membrane"/>
    <property type="evidence" value="ECO:0007669"/>
    <property type="project" value="UniProtKB-SubCell"/>
</dbReference>
<dbReference type="GO" id="GO:0045275">
    <property type="term" value="C:respiratory chain complex III"/>
    <property type="evidence" value="ECO:0007669"/>
    <property type="project" value="InterPro"/>
</dbReference>
<dbReference type="GO" id="GO:0046872">
    <property type="term" value="F:metal ion binding"/>
    <property type="evidence" value="ECO:0007669"/>
    <property type="project" value="UniProtKB-KW"/>
</dbReference>
<dbReference type="GO" id="GO:0008121">
    <property type="term" value="F:ubiquinol-cytochrome-c reductase activity"/>
    <property type="evidence" value="ECO:0007669"/>
    <property type="project" value="InterPro"/>
</dbReference>
<dbReference type="GO" id="GO:0006122">
    <property type="term" value="P:mitochondrial electron transport, ubiquinol to cytochrome c"/>
    <property type="evidence" value="ECO:0007669"/>
    <property type="project" value="TreeGrafter"/>
</dbReference>
<dbReference type="CDD" id="cd00290">
    <property type="entry name" value="cytochrome_b_C"/>
    <property type="match status" value="1"/>
</dbReference>
<dbReference type="CDD" id="cd00284">
    <property type="entry name" value="Cytochrome_b_N"/>
    <property type="match status" value="1"/>
</dbReference>
<dbReference type="FunFam" id="1.20.810.10:FF:000002">
    <property type="entry name" value="Cytochrome b"/>
    <property type="match status" value="1"/>
</dbReference>
<dbReference type="Gene3D" id="1.20.810.10">
    <property type="entry name" value="Cytochrome Bc1 Complex, Chain C"/>
    <property type="match status" value="1"/>
</dbReference>
<dbReference type="InterPro" id="IPR005798">
    <property type="entry name" value="Cyt_b/b6_C"/>
</dbReference>
<dbReference type="InterPro" id="IPR036150">
    <property type="entry name" value="Cyt_b/b6_C_sf"/>
</dbReference>
<dbReference type="InterPro" id="IPR005797">
    <property type="entry name" value="Cyt_b/b6_N"/>
</dbReference>
<dbReference type="InterPro" id="IPR027387">
    <property type="entry name" value="Cytb/b6-like_sf"/>
</dbReference>
<dbReference type="InterPro" id="IPR030689">
    <property type="entry name" value="Cytochrome_b"/>
</dbReference>
<dbReference type="InterPro" id="IPR048260">
    <property type="entry name" value="Cytochrome_b_C_euk/bac"/>
</dbReference>
<dbReference type="InterPro" id="IPR048259">
    <property type="entry name" value="Cytochrome_b_N_euk/bac"/>
</dbReference>
<dbReference type="InterPro" id="IPR016174">
    <property type="entry name" value="Di-haem_cyt_TM"/>
</dbReference>
<dbReference type="PANTHER" id="PTHR19271">
    <property type="entry name" value="CYTOCHROME B"/>
    <property type="match status" value="1"/>
</dbReference>
<dbReference type="PANTHER" id="PTHR19271:SF16">
    <property type="entry name" value="CYTOCHROME B"/>
    <property type="match status" value="1"/>
</dbReference>
<dbReference type="Pfam" id="PF00032">
    <property type="entry name" value="Cytochrom_B_C"/>
    <property type="match status" value="1"/>
</dbReference>
<dbReference type="Pfam" id="PF00033">
    <property type="entry name" value="Cytochrome_B"/>
    <property type="match status" value="1"/>
</dbReference>
<dbReference type="PIRSF" id="PIRSF038885">
    <property type="entry name" value="COB"/>
    <property type="match status" value="1"/>
</dbReference>
<dbReference type="SUPFAM" id="SSF81648">
    <property type="entry name" value="a domain/subunit of cytochrome bc1 complex (Ubiquinol-cytochrome c reductase)"/>
    <property type="match status" value="1"/>
</dbReference>
<dbReference type="SUPFAM" id="SSF81342">
    <property type="entry name" value="Transmembrane di-heme cytochromes"/>
    <property type="match status" value="1"/>
</dbReference>
<dbReference type="PROSITE" id="PS51003">
    <property type="entry name" value="CYTB_CTER"/>
    <property type="match status" value="1"/>
</dbReference>
<dbReference type="PROSITE" id="PS51002">
    <property type="entry name" value="CYTB_NTER"/>
    <property type="match status" value="1"/>
</dbReference>
<organism>
    <name type="scientific">Artibeus hartii</name>
    <name type="common">Little fruit-eating bat</name>
    <name type="synonym">Enchisthenes hartii</name>
    <dbReference type="NCBI Taxonomy" id="27654"/>
    <lineage>
        <taxon>Eukaryota</taxon>
        <taxon>Metazoa</taxon>
        <taxon>Chordata</taxon>
        <taxon>Craniata</taxon>
        <taxon>Vertebrata</taxon>
        <taxon>Euteleostomi</taxon>
        <taxon>Mammalia</taxon>
        <taxon>Eutheria</taxon>
        <taxon>Laurasiatheria</taxon>
        <taxon>Chiroptera</taxon>
        <taxon>Yangochiroptera</taxon>
        <taxon>Phyllostomidae</taxon>
        <taxon>Stenodermatinae</taxon>
        <taxon>Artibeus</taxon>
    </lineage>
</organism>
<keyword id="KW-0249">Electron transport</keyword>
<keyword id="KW-0349">Heme</keyword>
<keyword id="KW-0408">Iron</keyword>
<keyword id="KW-0472">Membrane</keyword>
<keyword id="KW-0479">Metal-binding</keyword>
<keyword id="KW-0496">Mitochondrion</keyword>
<keyword id="KW-0999">Mitochondrion inner membrane</keyword>
<keyword id="KW-0679">Respiratory chain</keyword>
<keyword id="KW-0812">Transmembrane</keyword>
<keyword id="KW-1133">Transmembrane helix</keyword>
<keyword id="KW-0813">Transport</keyword>
<keyword id="KW-0830">Ubiquinone</keyword>
<gene>
    <name type="primary">MT-CYB</name>
    <name type="synonym">COB</name>
    <name type="synonym">CYTB</name>
    <name type="synonym">MTCYB</name>
</gene>
<reference key="1">
    <citation type="submission" date="1996-08" db="EMBL/GenBank/DDBJ databases">
        <title>Phylogenetic accuracy, stability, and congruence: relationships within and among the New World bat genera Artibeus, Dermanura, and Koopmania.</title>
        <authorList>
            <person name="den Bussche R.A."/>
            <person name="Hudgeons J.L."/>
            <person name="Baker R.J."/>
        </authorList>
    </citation>
    <scope>NUCLEOTIDE SEQUENCE [GENOMIC DNA]</scope>
    <source>
        <strain>Isolate TK 22690</strain>
    </source>
</reference>
<reference key="2">
    <citation type="journal article" date="1993" name="Mol. Biol. Evol.">
        <title>Molecular phylogenetics of Stenodermatini bat genera: congruence of data from nuclear and mitochondrial DNA.</title>
        <authorList>
            <person name="den Bussche R.A."/>
            <person name="Baker R.J."/>
            <person name="Wichman H.A."/>
            <person name="Hamilton M.J."/>
        </authorList>
    </citation>
    <scope>NUCLEOTIDE SEQUENCE [GENOMIC DNA] OF 1-134</scope>
    <source>
        <strain>Isolate TK 22690</strain>
        <tissue>Muscle</tissue>
    </source>
</reference>
<proteinExistence type="inferred from homology"/>
<sequence length="379" mass="42738">MTNIRKTHPLLKIVNSSFVDLPAPSSLSSWWNFGSLLGICLGVQILTGVFLAMHYTSDTAKAFNSVTHICRDVNYGWLLRYLHANGASMFFICLYLHVGRGLYYGSYTYTETWNIGILLLFAVMATAFMGYVLPWGQMSFWGATDITNLLSAIPYIGTDLVQWIWGGFSVDKATLTRFFAFHFLLPFIVAALVMVHLLFLHETGSNNPTGIPSDPDMIPFHPYYTIKDILGFLIMLTALSTLVLFSPDLLGDPDNYIPANPLITPPHIKPEWYFLFAYAILRSIPNKLGGVLALVMSILILAIVPILHTSKQRSMMFRPLSQCLFWLLVAVLFTLTWIGGQPVEHPYIIIGQTASVLYFLIILIFMPLTSIMENYLLKW</sequence>
<evidence type="ECO:0000250" key="1"/>
<evidence type="ECO:0000250" key="2">
    <source>
        <dbReference type="UniProtKB" id="P00157"/>
    </source>
</evidence>
<evidence type="ECO:0000255" key="3">
    <source>
        <dbReference type="PROSITE-ProRule" id="PRU00967"/>
    </source>
</evidence>
<evidence type="ECO:0000255" key="4">
    <source>
        <dbReference type="PROSITE-ProRule" id="PRU00968"/>
    </source>
</evidence>
<evidence type="ECO:0000305" key="5"/>
<comment type="function">
    <text evidence="2">Component of the ubiquinol-cytochrome c reductase complex (complex III or cytochrome b-c1 complex) that is part of the mitochondrial respiratory chain. The b-c1 complex mediates electron transfer from ubiquinol to cytochrome c. Contributes to the generation of a proton gradient across the mitochondrial membrane that is then used for ATP synthesis.</text>
</comment>
<comment type="cofactor">
    <cofactor evidence="2">
        <name>heme b</name>
        <dbReference type="ChEBI" id="CHEBI:60344"/>
    </cofactor>
    <text evidence="2">Binds 2 heme b groups non-covalently.</text>
</comment>
<comment type="subunit">
    <text evidence="2">The cytochrome bc1 complex contains 11 subunits: 3 respiratory subunits (MT-CYB, CYC1 and UQCRFS1), 2 core proteins (UQCRC1 and UQCRC2) and 6 low-molecular weight proteins (UQCRH/QCR6, UQCRB/QCR7, UQCRQ/QCR8, UQCR10/QCR9, UQCR11/QCR10 and a cleavage product of UQCRFS1). This cytochrome bc1 complex then forms a dimer.</text>
</comment>
<comment type="subcellular location">
    <subcellularLocation>
        <location evidence="2">Mitochondrion inner membrane</location>
        <topology evidence="2">Multi-pass membrane protein</topology>
    </subcellularLocation>
</comment>
<comment type="miscellaneous">
    <text evidence="1">Heme 1 (or BL or b562) is low-potential and absorbs at about 562 nm, and heme 2 (or BH or b566) is high-potential and absorbs at about 566 nm.</text>
</comment>
<comment type="similarity">
    <text evidence="3 4">Belongs to the cytochrome b family.</text>
</comment>
<comment type="caution">
    <text evidence="2">The full-length protein contains only eight transmembrane helices, not nine as predicted by bioinformatics tools.</text>
</comment>